<organism>
    <name type="scientific">Klebsiella pneumoniae (strain 342)</name>
    <dbReference type="NCBI Taxonomy" id="507522"/>
    <lineage>
        <taxon>Bacteria</taxon>
        <taxon>Pseudomonadati</taxon>
        <taxon>Pseudomonadota</taxon>
        <taxon>Gammaproteobacteria</taxon>
        <taxon>Enterobacterales</taxon>
        <taxon>Enterobacteriaceae</taxon>
        <taxon>Klebsiella/Raoultella group</taxon>
        <taxon>Klebsiella</taxon>
        <taxon>Klebsiella pneumoniae complex</taxon>
    </lineage>
</organism>
<comment type="function">
    <text evidence="2">Catalyzes the dehydration of D-galactonate to 2-keto-3-deoxy-D-galactonate.</text>
</comment>
<comment type="catalytic activity">
    <reaction evidence="2">
        <text>D-galactonate = 2-dehydro-3-deoxy-D-galactonate + H2O</text>
        <dbReference type="Rhea" id="RHEA:18649"/>
        <dbReference type="ChEBI" id="CHEBI:12931"/>
        <dbReference type="ChEBI" id="CHEBI:15377"/>
        <dbReference type="ChEBI" id="CHEBI:57989"/>
        <dbReference type="EC" id="4.2.1.6"/>
    </reaction>
</comment>
<comment type="cofactor">
    <cofactor evidence="2">
        <name>Mg(2+)</name>
        <dbReference type="ChEBI" id="CHEBI:18420"/>
    </cofactor>
    <text evidence="2">Binds 1 Mg(2+) ion per subunit.</text>
</comment>
<comment type="pathway">
    <text evidence="2">Carbohydrate acid metabolism; D-galactonate degradation; D-glyceraldehyde 3-phosphate and pyruvate from D-galactonate: step 1/3.</text>
</comment>
<comment type="miscellaneous">
    <text evidence="2">Reaction proceeds via an anti dehydration.</text>
</comment>
<comment type="similarity">
    <text evidence="2">Belongs to the mandelate racemase/muconate lactonizing enzyme family. GalD subfamily.</text>
</comment>
<reference key="1">
    <citation type="journal article" date="2008" name="PLoS Genet.">
        <title>Complete genome sequence of the N2-fixing broad host range endophyte Klebsiella pneumoniae 342 and virulence predictions verified in mice.</title>
        <authorList>
            <person name="Fouts D.E."/>
            <person name="Tyler H.L."/>
            <person name="DeBoy R.T."/>
            <person name="Daugherty S."/>
            <person name="Ren Q."/>
            <person name="Badger J.H."/>
            <person name="Durkin A.S."/>
            <person name="Huot H."/>
            <person name="Shrivastava S."/>
            <person name="Kothari S."/>
            <person name="Dodson R.J."/>
            <person name="Mohamoud Y."/>
            <person name="Khouri H."/>
            <person name="Roesch L.F.W."/>
            <person name="Krogfelt K.A."/>
            <person name="Struve C."/>
            <person name="Triplett E.W."/>
            <person name="Methe B.A."/>
        </authorList>
    </citation>
    <scope>NUCLEOTIDE SEQUENCE [LARGE SCALE GENOMIC DNA]</scope>
    <source>
        <strain>342</strain>
    </source>
</reference>
<evidence type="ECO:0000250" key="1"/>
<evidence type="ECO:0000255" key="2">
    <source>
        <dbReference type="HAMAP-Rule" id="MF_01289"/>
    </source>
</evidence>
<gene>
    <name evidence="2" type="primary">dgoD</name>
    <name type="ordered locus">KPK_2036</name>
</gene>
<proteinExistence type="inferred from homology"/>
<feature type="chain" id="PRO_1000140384" description="D-galactonate dehydratase">
    <location>
        <begin position="1"/>
        <end position="382"/>
    </location>
</feature>
<feature type="active site" description="Proton donor" evidence="1">
    <location>
        <position position="185"/>
    </location>
</feature>
<feature type="active site" description="Proton acceptor" evidence="1">
    <location>
        <position position="285"/>
    </location>
</feature>
<feature type="binding site" evidence="2">
    <location>
        <position position="183"/>
    </location>
    <ligand>
        <name>Mg(2+)</name>
        <dbReference type="ChEBI" id="CHEBI:18420"/>
    </ligand>
</feature>
<feature type="binding site" evidence="2">
    <location>
        <position position="209"/>
    </location>
    <ligand>
        <name>Mg(2+)</name>
        <dbReference type="ChEBI" id="CHEBI:18420"/>
    </ligand>
</feature>
<feature type="binding site" evidence="2">
    <location>
        <position position="235"/>
    </location>
    <ligand>
        <name>Mg(2+)</name>
        <dbReference type="ChEBI" id="CHEBI:18420"/>
    </ligand>
</feature>
<feature type="site" description="Increases basicity of active site His" evidence="2">
    <location>
        <position position="258"/>
    </location>
</feature>
<feature type="site" description="Transition state stabilizer" evidence="2">
    <location>
        <position position="310"/>
    </location>
</feature>
<keyword id="KW-0456">Lyase</keyword>
<keyword id="KW-0460">Magnesium</keyword>
<keyword id="KW-0479">Metal-binding</keyword>
<sequence>MKITKLTTWRLPPRWMFLKIETDEGIVGWGEPIVEGRARTVEAAVHELGDYLIGQDPARINDLWQVMYRAGFYRGGPILMSAIAGIDQALWDIKGKALNAPVWQLLGGLVRDKIKAYSWVGGDRPAEVIAGINTLRGMGFDTFKLNGCQEMGMIDSSRTVDAAVNTVAQIREAFGNDIEFGLDFHGRVSAPMAKLLIKELEPYRPLFIEEPVLAEQAEYYPRLAAQTAIPLAAGERMFSRFEFKRVLEAGGLAILQPDLSHAGGITECFKIAGMAEAADVSLAPHCPLGPIALAACLHVDFVSYNAVFQEQSMGIHYNQGAELLDFVKNKADFNMEGGYFKPLMKPGLGVDIDEDKVIEMSRRAPDWRNPVWRLADGVVAEW</sequence>
<dbReference type="EC" id="4.2.1.6" evidence="2"/>
<dbReference type="EMBL" id="CP000964">
    <property type="protein sequence ID" value="ACI08058.1"/>
    <property type="molecule type" value="Genomic_DNA"/>
</dbReference>
<dbReference type="SMR" id="B5XW18"/>
<dbReference type="KEGG" id="kpe:KPK_2036"/>
<dbReference type="HOGENOM" id="CLU_030273_3_2_6"/>
<dbReference type="UniPathway" id="UPA00081">
    <property type="reaction ID" value="UER00518"/>
</dbReference>
<dbReference type="Proteomes" id="UP000001734">
    <property type="component" value="Chromosome"/>
</dbReference>
<dbReference type="GO" id="GO:0008869">
    <property type="term" value="F:galactonate dehydratase activity"/>
    <property type="evidence" value="ECO:0007669"/>
    <property type="project" value="UniProtKB-UniRule"/>
</dbReference>
<dbReference type="GO" id="GO:0000287">
    <property type="term" value="F:magnesium ion binding"/>
    <property type="evidence" value="ECO:0007669"/>
    <property type="project" value="UniProtKB-UniRule"/>
</dbReference>
<dbReference type="GO" id="GO:0009063">
    <property type="term" value="P:amino acid catabolic process"/>
    <property type="evidence" value="ECO:0007669"/>
    <property type="project" value="InterPro"/>
</dbReference>
<dbReference type="GO" id="GO:0034194">
    <property type="term" value="P:D-galactonate catabolic process"/>
    <property type="evidence" value="ECO:0007669"/>
    <property type="project" value="UniProtKB-UniRule"/>
</dbReference>
<dbReference type="CDD" id="cd03325">
    <property type="entry name" value="D-galactonate_dehydratase"/>
    <property type="match status" value="1"/>
</dbReference>
<dbReference type="FunFam" id="3.30.390.10:FF:000003">
    <property type="entry name" value="D-galactonate dehydratase"/>
    <property type="match status" value="1"/>
</dbReference>
<dbReference type="Gene3D" id="3.20.20.120">
    <property type="entry name" value="Enolase-like C-terminal domain"/>
    <property type="match status" value="1"/>
</dbReference>
<dbReference type="Gene3D" id="3.30.390.10">
    <property type="entry name" value="Enolase-like, N-terminal domain"/>
    <property type="match status" value="1"/>
</dbReference>
<dbReference type="HAMAP" id="MF_01289">
    <property type="entry name" value="Galacton_dehydrat"/>
    <property type="match status" value="1"/>
</dbReference>
<dbReference type="InterPro" id="IPR034593">
    <property type="entry name" value="DgoD-like"/>
</dbReference>
<dbReference type="InterPro" id="IPR036849">
    <property type="entry name" value="Enolase-like_C_sf"/>
</dbReference>
<dbReference type="InterPro" id="IPR029017">
    <property type="entry name" value="Enolase-like_N"/>
</dbReference>
<dbReference type="InterPro" id="IPR029065">
    <property type="entry name" value="Enolase_C-like"/>
</dbReference>
<dbReference type="InterPro" id="IPR023592">
    <property type="entry name" value="Galactonate_deHydtase"/>
</dbReference>
<dbReference type="InterPro" id="IPR018110">
    <property type="entry name" value="Mandel_Rmase/mucon_lact_enz_CS"/>
</dbReference>
<dbReference type="InterPro" id="IPR013342">
    <property type="entry name" value="Mandelate_racemase_C"/>
</dbReference>
<dbReference type="InterPro" id="IPR013341">
    <property type="entry name" value="Mandelate_racemase_N_dom"/>
</dbReference>
<dbReference type="NCBIfam" id="NF010624">
    <property type="entry name" value="PRK14017.1"/>
    <property type="match status" value="1"/>
</dbReference>
<dbReference type="PANTHER" id="PTHR48080:SF2">
    <property type="entry name" value="D-GALACTONATE DEHYDRATASE"/>
    <property type="match status" value="1"/>
</dbReference>
<dbReference type="PANTHER" id="PTHR48080">
    <property type="entry name" value="D-GALACTONATE DEHYDRATASE-RELATED"/>
    <property type="match status" value="1"/>
</dbReference>
<dbReference type="Pfam" id="PF13378">
    <property type="entry name" value="MR_MLE_C"/>
    <property type="match status" value="1"/>
</dbReference>
<dbReference type="Pfam" id="PF02746">
    <property type="entry name" value="MR_MLE_N"/>
    <property type="match status" value="1"/>
</dbReference>
<dbReference type="SFLD" id="SFLDF00003">
    <property type="entry name" value="D-galactonate_dehydratase"/>
    <property type="match status" value="1"/>
</dbReference>
<dbReference type="SFLD" id="SFLDS00001">
    <property type="entry name" value="Enolase"/>
    <property type="match status" value="1"/>
</dbReference>
<dbReference type="SMART" id="SM00922">
    <property type="entry name" value="MR_MLE"/>
    <property type="match status" value="1"/>
</dbReference>
<dbReference type="SUPFAM" id="SSF51604">
    <property type="entry name" value="Enolase C-terminal domain-like"/>
    <property type="match status" value="1"/>
</dbReference>
<dbReference type="SUPFAM" id="SSF54826">
    <property type="entry name" value="Enolase N-terminal domain-like"/>
    <property type="match status" value="1"/>
</dbReference>
<dbReference type="PROSITE" id="PS00908">
    <property type="entry name" value="MR_MLE_1"/>
    <property type="match status" value="1"/>
</dbReference>
<dbReference type="PROSITE" id="PS00909">
    <property type="entry name" value="MR_MLE_2"/>
    <property type="match status" value="1"/>
</dbReference>
<protein>
    <recommendedName>
        <fullName evidence="2">D-galactonate dehydratase</fullName>
        <shortName evidence="2">GalD</shortName>
        <ecNumber evidence="2">4.2.1.6</ecNumber>
    </recommendedName>
</protein>
<accession>B5XW18</accession>
<name>DGOD_KLEP3</name>